<proteinExistence type="inferred from homology"/>
<name>AMIF_HELPJ</name>
<comment type="function">
    <text evidence="1">Is an aliphatic amidase with a restricted substrate specificity, as it only hydrolyzes formamide.</text>
</comment>
<comment type="catalytic activity">
    <reaction evidence="1">
        <text>formamide + H2O = formate + NH4(+)</text>
        <dbReference type="Rhea" id="RHEA:21948"/>
        <dbReference type="ChEBI" id="CHEBI:15377"/>
        <dbReference type="ChEBI" id="CHEBI:15740"/>
        <dbReference type="ChEBI" id="CHEBI:16397"/>
        <dbReference type="ChEBI" id="CHEBI:28938"/>
        <dbReference type="EC" id="3.5.1.49"/>
    </reaction>
</comment>
<comment type="similarity">
    <text evidence="1">Belongs to the carbon-nitrogen hydrolase superfamily. Aliphatic amidase family.</text>
</comment>
<reference key="1">
    <citation type="journal article" date="1999" name="Nature">
        <title>Genomic sequence comparison of two unrelated isolates of the human gastric pathogen Helicobacter pylori.</title>
        <authorList>
            <person name="Alm R.A."/>
            <person name="Ling L.-S.L."/>
            <person name="Moir D.T."/>
            <person name="King B.L."/>
            <person name="Brown E.D."/>
            <person name="Doig P.C."/>
            <person name="Smith D.R."/>
            <person name="Noonan B."/>
            <person name="Guild B.C."/>
            <person name="deJonge B.L."/>
            <person name="Carmel G."/>
            <person name="Tummino P.J."/>
            <person name="Caruso A."/>
            <person name="Uria-Nickelsen M."/>
            <person name="Mills D.M."/>
            <person name="Ives C."/>
            <person name="Gibson R."/>
            <person name="Merberg D."/>
            <person name="Mills S.D."/>
            <person name="Jiang Q."/>
            <person name="Taylor D.E."/>
            <person name="Vovis G.F."/>
            <person name="Trust T.J."/>
        </authorList>
    </citation>
    <scope>NUCLEOTIDE SEQUENCE [LARGE SCALE GENOMIC DNA]</scope>
    <source>
        <strain>J99 / ATCC 700824</strain>
    </source>
</reference>
<feature type="chain" id="PRO_0000204066" description="Formamidase">
    <location>
        <begin position="1"/>
        <end position="334"/>
    </location>
</feature>
<feature type="domain" description="CN hydrolase" evidence="2">
    <location>
        <begin position="14"/>
        <end position="260"/>
    </location>
</feature>
<feature type="active site" description="Proton acceptor" evidence="1">
    <location>
        <position position="60"/>
    </location>
</feature>
<feature type="active site" description="Proton donor" evidence="1">
    <location>
        <position position="133"/>
    </location>
</feature>
<feature type="active site" description="Nucleophile" evidence="1">
    <location>
        <position position="166"/>
    </location>
</feature>
<keyword id="KW-0378">Hydrolase</keyword>
<accession>Q9ZJY8</accession>
<protein>
    <recommendedName>
        <fullName evidence="1">Formamidase</fullName>
        <ecNumber evidence="1">3.5.1.49</ecNumber>
    </recommendedName>
    <alternativeName>
        <fullName evidence="1">Formamide amidohydrolase</fullName>
    </alternativeName>
</protein>
<sequence length="334" mass="37257">MGSIGSMGKPIEGFLVAAIQFPVPIVNSRKDIDHNIESIIRTLHATKAGYPGVELIIFPEYSTQGLNTAKWLSEEFLLDVPGKETELYAKACKEAKVYGVLSIMERNPDSNENPYNTAIIIDPQGKIILKYRKLFPWNPIEPWYPGDLGMPVCEGPGGSKLAVCICHDGMIPELAREAAYKGCNVYIRISGYSTQVNDQWILTNRSNAWHNLMYTVSVNLAGYDNVFYYFGEGQICNFDGTTLVQGHRNPWEIVTGEIYPKMADNARLSWGLENNIYNLGHRGYVAKPGGEHDAGLTYIKDLAAGKYKLPWEDHMKIKDGSIYGYPTTGGRFGK</sequence>
<gene>
    <name evidence="1" type="primary">amiF</name>
    <name type="ordered locus">jhp_1159</name>
</gene>
<organism>
    <name type="scientific">Helicobacter pylori (strain J99 / ATCC 700824)</name>
    <name type="common">Campylobacter pylori J99</name>
    <dbReference type="NCBI Taxonomy" id="85963"/>
    <lineage>
        <taxon>Bacteria</taxon>
        <taxon>Pseudomonadati</taxon>
        <taxon>Campylobacterota</taxon>
        <taxon>Epsilonproteobacteria</taxon>
        <taxon>Campylobacterales</taxon>
        <taxon>Helicobacteraceae</taxon>
        <taxon>Helicobacter</taxon>
    </lineage>
</organism>
<dbReference type="EC" id="3.5.1.49" evidence="1"/>
<dbReference type="EMBL" id="AE001439">
    <property type="protein sequence ID" value="AAD06736.1"/>
    <property type="molecule type" value="Genomic_DNA"/>
</dbReference>
<dbReference type="PIR" id="C71842">
    <property type="entry name" value="C71842"/>
</dbReference>
<dbReference type="RefSeq" id="WP_000534784.1">
    <property type="nucleotide sequence ID" value="NC_000921.1"/>
</dbReference>
<dbReference type="SMR" id="Q9ZJY8"/>
<dbReference type="KEGG" id="hpj:jhp_1159"/>
<dbReference type="eggNOG" id="COG0388">
    <property type="taxonomic scope" value="Bacteria"/>
</dbReference>
<dbReference type="Proteomes" id="UP000000804">
    <property type="component" value="Chromosome"/>
</dbReference>
<dbReference type="GO" id="GO:0004328">
    <property type="term" value="F:formamidase activity"/>
    <property type="evidence" value="ECO:0007669"/>
    <property type="project" value="UniProtKB-UniRule"/>
</dbReference>
<dbReference type="GO" id="GO:0050126">
    <property type="term" value="F:N-carbamoylputrescine amidase activity"/>
    <property type="evidence" value="ECO:0007669"/>
    <property type="project" value="TreeGrafter"/>
</dbReference>
<dbReference type="GO" id="GO:0033388">
    <property type="term" value="P:putrescine biosynthetic process from arginine"/>
    <property type="evidence" value="ECO:0007669"/>
    <property type="project" value="TreeGrafter"/>
</dbReference>
<dbReference type="CDD" id="cd07565">
    <property type="entry name" value="aliphatic_amidase"/>
    <property type="match status" value="1"/>
</dbReference>
<dbReference type="Gene3D" id="3.60.110.10">
    <property type="entry name" value="Carbon-nitrogen hydrolase"/>
    <property type="match status" value="1"/>
</dbReference>
<dbReference type="HAMAP" id="MF_01243">
    <property type="entry name" value="Formamidase"/>
    <property type="match status" value="1"/>
</dbReference>
<dbReference type="InterPro" id="IPR050345">
    <property type="entry name" value="Aliph_Amidase/BUP"/>
</dbReference>
<dbReference type="InterPro" id="IPR003010">
    <property type="entry name" value="C-N_Hydrolase"/>
</dbReference>
<dbReference type="InterPro" id="IPR036526">
    <property type="entry name" value="C-N_Hydrolase_sf"/>
</dbReference>
<dbReference type="InterPro" id="IPR022843">
    <property type="entry name" value="Formamidase"/>
</dbReference>
<dbReference type="NCBIfam" id="NF009803">
    <property type="entry name" value="PRK13287.1"/>
    <property type="match status" value="1"/>
</dbReference>
<dbReference type="PANTHER" id="PTHR43674:SF15">
    <property type="entry name" value="FORMAMIDASE"/>
    <property type="match status" value="1"/>
</dbReference>
<dbReference type="PANTHER" id="PTHR43674">
    <property type="entry name" value="NITRILASE C965.09-RELATED"/>
    <property type="match status" value="1"/>
</dbReference>
<dbReference type="Pfam" id="PF00795">
    <property type="entry name" value="CN_hydrolase"/>
    <property type="match status" value="1"/>
</dbReference>
<dbReference type="SUPFAM" id="SSF56317">
    <property type="entry name" value="Carbon-nitrogen hydrolase"/>
    <property type="match status" value="1"/>
</dbReference>
<dbReference type="PROSITE" id="PS50263">
    <property type="entry name" value="CN_HYDROLASE"/>
    <property type="match status" value="1"/>
</dbReference>
<evidence type="ECO:0000255" key="1">
    <source>
        <dbReference type="HAMAP-Rule" id="MF_01243"/>
    </source>
</evidence>
<evidence type="ECO:0000255" key="2">
    <source>
        <dbReference type="PROSITE-ProRule" id="PRU00054"/>
    </source>
</evidence>